<evidence type="ECO:0000250" key="1"/>
<evidence type="ECO:0000255" key="2"/>
<evidence type="ECO:0000256" key="3">
    <source>
        <dbReference type="SAM" id="MobiDB-lite"/>
    </source>
</evidence>
<evidence type="ECO:0000305" key="4"/>
<sequence>MGRLFLCLVVAWCWVALLLVAPVHGRVGLPGEFSGDQRPVPATSFDLVTEPKTKQPRGVKGTRRPSWSSWSSTASRSSPPPGRGAPSAAAAAELRSVPAGPDPMHHHGSPRRPEHARSTGRP</sequence>
<dbReference type="EMBL" id="CM000136">
    <property type="protein sequence ID" value="EAY81521.1"/>
    <property type="molecule type" value="Genomic_DNA"/>
</dbReference>
<dbReference type="STRING" id="39946.A2ZFY7"/>
<dbReference type="EnsemblPlants" id="BGIOSGA035548-TA">
    <property type="protein sequence ID" value="BGIOSGA035548-PA"/>
    <property type="gene ID" value="BGIOSGA035548"/>
</dbReference>
<dbReference type="EnsemblPlants" id="OsGoSa_11g0019120.01">
    <property type="protein sequence ID" value="OsGoSa_11g0019120.01"/>
    <property type="gene ID" value="OsGoSa_11g0019120"/>
</dbReference>
<dbReference type="EnsemblPlants" id="OsLima_11g0019610.01">
    <property type="protein sequence ID" value="OsLima_11g0019610.01"/>
    <property type="gene ID" value="OsLima_11g0019610"/>
</dbReference>
<dbReference type="EnsemblPlants" id="OsLiXu_11g0018870.01">
    <property type="protein sequence ID" value="OsLiXu_11g0018870.01"/>
    <property type="gene ID" value="OsLiXu_11g0018870"/>
</dbReference>
<dbReference type="EnsemblPlants" id="OsMH63_11G020020_01">
    <property type="protein sequence ID" value="OsMH63_11G020020_01"/>
    <property type="gene ID" value="OsMH63_11G020020"/>
</dbReference>
<dbReference type="EnsemblPlants" id="OsPr106_11g0019200.01">
    <property type="protein sequence ID" value="OsPr106_11g0019200.01"/>
    <property type="gene ID" value="OsPr106_11g0019200"/>
</dbReference>
<dbReference type="Gramene" id="BGIOSGA035548-TA">
    <property type="protein sequence ID" value="BGIOSGA035548-PA"/>
    <property type="gene ID" value="BGIOSGA035548"/>
</dbReference>
<dbReference type="Gramene" id="OsGoSa_11g0019120.01">
    <property type="protein sequence ID" value="OsGoSa_11g0019120.01"/>
    <property type="gene ID" value="OsGoSa_11g0019120"/>
</dbReference>
<dbReference type="Gramene" id="OsLima_11g0019610.01">
    <property type="protein sequence ID" value="OsLima_11g0019610.01"/>
    <property type="gene ID" value="OsLima_11g0019610"/>
</dbReference>
<dbReference type="Gramene" id="OsLiXu_11g0018870.01">
    <property type="protein sequence ID" value="OsLiXu_11g0018870.01"/>
    <property type="gene ID" value="OsLiXu_11g0018870"/>
</dbReference>
<dbReference type="Gramene" id="OsMH63_11G020020_01">
    <property type="protein sequence ID" value="OsMH63_11G020020_01"/>
    <property type="gene ID" value="OsMH63_11G020020"/>
</dbReference>
<dbReference type="Gramene" id="OsPr106_11g0019200.01">
    <property type="protein sequence ID" value="OsPr106_11g0019200.01"/>
    <property type="gene ID" value="OsPr106_11g0019200"/>
</dbReference>
<dbReference type="HOGENOM" id="CLU_2201003_0_0_1"/>
<dbReference type="OMA" id="VAWWCLV"/>
<dbReference type="OrthoDB" id="696564at2759"/>
<dbReference type="Proteomes" id="UP000007015">
    <property type="component" value="Chromosome 11"/>
</dbReference>
<dbReference type="GO" id="GO:0005576">
    <property type="term" value="C:extracellular region"/>
    <property type="evidence" value="ECO:0007669"/>
    <property type="project" value="UniProtKB-SubCell"/>
</dbReference>
<dbReference type="GO" id="GO:0033612">
    <property type="term" value="F:receptor serine/threonine kinase binding"/>
    <property type="evidence" value="ECO:0007669"/>
    <property type="project" value="InterPro"/>
</dbReference>
<dbReference type="GO" id="GO:0030154">
    <property type="term" value="P:cell differentiation"/>
    <property type="evidence" value="ECO:0007669"/>
    <property type="project" value="UniProtKB-KW"/>
</dbReference>
<dbReference type="InterPro" id="IPR044962">
    <property type="entry name" value="CLV3/ESR"/>
</dbReference>
<dbReference type="PANTHER" id="PTHR36349">
    <property type="entry name" value="PROTEIN CLAVATA 3"/>
    <property type="match status" value="1"/>
</dbReference>
<dbReference type="PANTHER" id="PTHR36349:SF2">
    <property type="entry name" value="PROTEIN CLAVATA 3"/>
    <property type="match status" value="1"/>
</dbReference>
<accession>A2ZFY7</accession>
<feature type="signal peptide" evidence="2">
    <location>
        <begin position="1"/>
        <end position="25"/>
    </location>
</feature>
<feature type="chain" id="PRO_0000422036" description="Protein FLORAL ORGAN NUMBER2">
    <location>
        <begin position="26"/>
        <end position="122"/>
    </location>
</feature>
<feature type="region of interest" description="Disordered" evidence="3">
    <location>
        <begin position="28"/>
        <end position="122"/>
    </location>
</feature>
<feature type="compositionally biased region" description="Basic residues" evidence="3">
    <location>
        <begin position="54"/>
        <end position="63"/>
    </location>
</feature>
<feature type="compositionally biased region" description="Low complexity" evidence="3">
    <location>
        <begin position="64"/>
        <end position="77"/>
    </location>
</feature>
<feature type="compositionally biased region" description="Basic and acidic residues" evidence="3">
    <location>
        <begin position="111"/>
        <end position="122"/>
    </location>
</feature>
<comment type="function">
    <text evidence="1">Probable extracellular signal that regulates meristem maintenance. May function as a putative ligand for a receptor complex including FON1. Regulates the size of the floral meristem and the number of floral organs (By similarity).</text>
</comment>
<comment type="subcellular location">
    <subcellularLocation>
        <location evidence="1">Secreted</location>
    </subcellularLocation>
</comment>
<comment type="similarity">
    <text evidence="4">Belongs to the CLV3/ESR signal peptide family.</text>
</comment>
<gene>
    <name type="primary">FON2</name>
    <name type="ORF">OsI_36691</name>
</gene>
<keyword id="KW-0217">Developmental protein</keyword>
<keyword id="KW-0221">Differentiation</keyword>
<keyword id="KW-1185">Reference proteome</keyword>
<keyword id="KW-0964">Secreted</keyword>
<keyword id="KW-0732">Signal</keyword>
<organism>
    <name type="scientific">Oryza sativa subsp. indica</name>
    <name type="common">Rice</name>
    <dbReference type="NCBI Taxonomy" id="39946"/>
    <lineage>
        <taxon>Eukaryota</taxon>
        <taxon>Viridiplantae</taxon>
        <taxon>Streptophyta</taxon>
        <taxon>Embryophyta</taxon>
        <taxon>Tracheophyta</taxon>
        <taxon>Spermatophyta</taxon>
        <taxon>Magnoliopsida</taxon>
        <taxon>Liliopsida</taxon>
        <taxon>Poales</taxon>
        <taxon>Poaceae</taxon>
        <taxon>BOP clade</taxon>
        <taxon>Oryzoideae</taxon>
        <taxon>Oryzeae</taxon>
        <taxon>Oryzinae</taxon>
        <taxon>Oryza</taxon>
        <taxon>Oryza sativa</taxon>
    </lineage>
</organism>
<proteinExistence type="inferred from homology"/>
<protein>
    <recommendedName>
        <fullName>Protein FLORAL ORGAN NUMBER2</fullName>
        <shortName>OsFON2</shortName>
    </recommendedName>
    <alternativeName>
        <fullName>CLAVATA3-like protein</fullName>
    </alternativeName>
</protein>
<name>FON2_ORYSI</name>
<reference key="1">
    <citation type="journal article" date="2005" name="PLoS Biol.">
        <title>The genomes of Oryza sativa: a history of duplications.</title>
        <authorList>
            <person name="Yu J."/>
            <person name="Wang J."/>
            <person name="Lin W."/>
            <person name="Li S."/>
            <person name="Li H."/>
            <person name="Zhou J."/>
            <person name="Ni P."/>
            <person name="Dong W."/>
            <person name="Hu S."/>
            <person name="Zeng C."/>
            <person name="Zhang J."/>
            <person name="Zhang Y."/>
            <person name="Li R."/>
            <person name="Xu Z."/>
            <person name="Li S."/>
            <person name="Li X."/>
            <person name="Zheng H."/>
            <person name="Cong L."/>
            <person name="Lin L."/>
            <person name="Yin J."/>
            <person name="Geng J."/>
            <person name="Li G."/>
            <person name="Shi J."/>
            <person name="Liu J."/>
            <person name="Lv H."/>
            <person name="Li J."/>
            <person name="Wang J."/>
            <person name="Deng Y."/>
            <person name="Ran L."/>
            <person name="Shi X."/>
            <person name="Wang X."/>
            <person name="Wu Q."/>
            <person name="Li C."/>
            <person name="Ren X."/>
            <person name="Wang J."/>
            <person name="Wang X."/>
            <person name="Li D."/>
            <person name="Liu D."/>
            <person name="Zhang X."/>
            <person name="Ji Z."/>
            <person name="Zhao W."/>
            <person name="Sun Y."/>
            <person name="Zhang Z."/>
            <person name="Bao J."/>
            <person name="Han Y."/>
            <person name="Dong L."/>
            <person name="Ji J."/>
            <person name="Chen P."/>
            <person name="Wu S."/>
            <person name="Liu J."/>
            <person name="Xiao Y."/>
            <person name="Bu D."/>
            <person name="Tan J."/>
            <person name="Yang L."/>
            <person name="Ye C."/>
            <person name="Zhang J."/>
            <person name="Xu J."/>
            <person name="Zhou Y."/>
            <person name="Yu Y."/>
            <person name="Zhang B."/>
            <person name="Zhuang S."/>
            <person name="Wei H."/>
            <person name="Liu B."/>
            <person name="Lei M."/>
            <person name="Yu H."/>
            <person name="Li Y."/>
            <person name="Xu H."/>
            <person name="Wei S."/>
            <person name="He X."/>
            <person name="Fang L."/>
            <person name="Zhang Z."/>
            <person name="Zhang Y."/>
            <person name="Huang X."/>
            <person name="Su Z."/>
            <person name="Tong W."/>
            <person name="Li J."/>
            <person name="Tong Z."/>
            <person name="Li S."/>
            <person name="Ye J."/>
            <person name="Wang L."/>
            <person name="Fang L."/>
            <person name="Lei T."/>
            <person name="Chen C.-S."/>
            <person name="Chen H.-C."/>
            <person name="Xu Z."/>
            <person name="Li H."/>
            <person name="Huang H."/>
            <person name="Zhang F."/>
            <person name="Xu H."/>
            <person name="Li N."/>
            <person name="Zhao C."/>
            <person name="Li S."/>
            <person name="Dong L."/>
            <person name="Huang Y."/>
            <person name="Li L."/>
            <person name="Xi Y."/>
            <person name="Qi Q."/>
            <person name="Li W."/>
            <person name="Zhang B."/>
            <person name="Hu W."/>
            <person name="Zhang Y."/>
            <person name="Tian X."/>
            <person name="Jiao Y."/>
            <person name="Liang X."/>
            <person name="Jin J."/>
            <person name="Gao L."/>
            <person name="Zheng W."/>
            <person name="Hao B."/>
            <person name="Liu S.-M."/>
            <person name="Wang W."/>
            <person name="Yuan L."/>
            <person name="Cao M."/>
            <person name="McDermott J."/>
            <person name="Samudrala R."/>
            <person name="Wang J."/>
            <person name="Wong G.K.-S."/>
            <person name="Yang H."/>
        </authorList>
    </citation>
    <scope>NUCLEOTIDE SEQUENCE [LARGE SCALE GENOMIC DNA]</scope>
    <source>
        <strain>cv. 93-11</strain>
    </source>
</reference>